<name>SAU68_ARATH</name>
<feature type="chain" id="PRO_0000433080" description="Auxin-responsive protein SAUR68">
    <location>
        <begin position="1"/>
        <end position="102"/>
    </location>
</feature>
<feature type="sequence conflict" description="In Ref. 5; AAM63462." evidence="3" ref="5">
    <original>S</original>
    <variation>Y</variation>
    <location>
        <position position="38"/>
    </location>
</feature>
<gene>
    <name evidence="2" type="primary">SAUR68</name>
    <name evidence="4" type="ordered locus">At1g29490</name>
    <name evidence="5" type="ORF">F15D2.7</name>
</gene>
<organism>
    <name type="scientific">Arabidopsis thaliana</name>
    <name type="common">Mouse-ear cress</name>
    <dbReference type="NCBI Taxonomy" id="3702"/>
    <lineage>
        <taxon>Eukaryota</taxon>
        <taxon>Viridiplantae</taxon>
        <taxon>Streptophyta</taxon>
        <taxon>Embryophyta</taxon>
        <taxon>Tracheophyta</taxon>
        <taxon>Spermatophyta</taxon>
        <taxon>Magnoliopsida</taxon>
        <taxon>eudicotyledons</taxon>
        <taxon>Gunneridae</taxon>
        <taxon>Pentapetalae</taxon>
        <taxon>rosids</taxon>
        <taxon>malvids</taxon>
        <taxon>Brassicales</taxon>
        <taxon>Brassicaceae</taxon>
        <taxon>Camelineae</taxon>
        <taxon>Arabidopsis</taxon>
    </lineage>
</organism>
<sequence length="102" mass="11661">MMNTKKLMKMAKKWQQRAALRRKRISFQRSNSTTSSSSAVEKGCFVVYTADQVRFAFPISYLSNSVIQELLKISEEEFGIPTEGPITLPFDSIRFSWSISSN</sequence>
<accession>Q29Q96</accession>
<accession>A0MEA1</accession>
<accession>Q8LCQ5</accession>
<accession>Q9C7Q2</accession>
<comment type="function">
    <text evidence="1">May promote auxin-stimulated organ elongation, such as hypocotyls, stamen filaments and petals.</text>
</comment>
<comment type="subcellular location">
    <subcellularLocation>
        <location evidence="1">Cell membrane</location>
        <topology evidence="1">Peripheral membrane protein</topology>
    </subcellularLocation>
</comment>
<comment type="similarity">
    <text evidence="3">Belongs to the ARG7 family.</text>
</comment>
<comment type="sequence caution" evidence="3">
    <conflict type="erroneous gene model prediction">
        <sequence resource="EMBL-CDS" id="AAG51757"/>
    </conflict>
</comment>
<comment type="sequence caution" evidence="3">
    <conflict type="erroneous termination">
        <sequence resource="EMBL-CDS" id="ABK28423"/>
    </conflict>
    <text>Extended C-terminus.</text>
</comment>
<evidence type="ECO:0000250" key="1">
    <source>
        <dbReference type="UniProtKB" id="F4I1H5"/>
    </source>
</evidence>
<evidence type="ECO:0000303" key="2">
    <source>
    </source>
</evidence>
<evidence type="ECO:0000305" key="3"/>
<evidence type="ECO:0000312" key="4">
    <source>
        <dbReference type="Araport" id="AT1G29490"/>
    </source>
</evidence>
<evidence type="ECO:0000312" key="5">
    <source>
        <dbReference type="EMBL" id="AAG51757.1"/>
    </source>
</evidence>
<protein>
    <recommendedName>
        <fullName evidence="3">Auxin-responsive protein SAUR68</fullName>
    </recommendedName>
    <alternativeName>
        <fullName evidence="2">Protein SMALL AUXIN UP RNA 68</fullName>
    </alternativeName>
</protein>
<proteinExistence type="inferred from homology"/>
<dbReference type="EMBL" id="AC068667">
    <property type="protein sequence ID" value="AAG51757.1"/>
    <property type="status" value="ALT_SEQ"/>
    <property type="molecule type" value="Genomic_DNA"/>
</dbReference>
<dbReference type="EMBL" id="CP002684">
    <property type="protein sequence ID" value="AEE31096.1"/>
    <property type="molecule type" value="Genomic_DNA"/>
</dbReference>
<dbReference type="EMBL" id="DQ446307">
    <property type="protein sequence ID" value="ABE65671.1"/>
    <property type="molecule type" value="mRNA"/>
</dbReference>
<dbReference type="EMBL" id="DQ652870">
    <property type="protein sequence ID" value="ABK28423.1"/>
    <property type="status" value="ALT_SEQ"/>
    <property type="molecule type" value="mRNA"/>
</dbReference>
<dbReference type="EMBL" id="BT024660">
    <property type="protein sequence ID" value="ABD57485.1"/>
    <property type="molecule type" value="mRNA"/>
</dbReference>
<dbReference type="EMBL" id="AY086459">
    <property type="protein sequence ID" value="AAM63462.1"/>
    <property type="molecule type" value="mRNA"/>
</dbReference>
<dbReference type="PIR" id="G86417">
    <property type="entry name" value="G86417"/>
</dbReference>
<dbReference type="RefSeq" id="NP_564331.1">
    <property type="nucleotide sequence ID" value="NM_102689.2"/>
</dbReference>
<dbReference type="STRING" id="3702.Q29Q96"/>
<dbReference type="PaxDb" id="3702-AT1G29490.1"/>
<dbReference type="EnsemblPlants" id="AT1G29490.1">
    <property type="protein sequence ID" value="AT1G29490.1"/>
    <property type="gene ID" value="AT1G29490"/>
</dbReference>
<dbReference type="GeneID" id="839826"/>
<dbReference type="Gramene" id="AT1G29490.1">
    <property type="protein sequence ID" value="AT1G29490.1"/>
    <property type="gene ID" value="AT1G29490"/>
</dbReference>
<dbReference type="KEGG" id="ath:AT1G29490"/>
<dbReference type="Araport" id="AT1G29490"/>
<dbReference type="TAIR" id="AT1G29490">
    <property type="gene designation" value="SAUR68"/>
</dbReference>
<dbReference type="eggNOG" id="ENOG502S4GQ">
    <property type="taxonomic scope" value="Eukaryota"/>
</dbReference>
<dbReference type="HOGENOM" id="CLU_090137_1_0_1"/>
<dbReference type="InParanoid" id="Q29Q96"/>
<dbReference type="OMA" id="CNERMAN"/>
<dbReference type="PhylomeDB" id="Q29Q96"/>
<dbReference type="PRO" id="PR:Q29Q96"/>
<dbReference type="Proteomes" id="UP000006548">
    <property type="component" value="Chromosome 1"/>
</dbReference>
<dbReference type="ExpressionAtlas" id="Q29Q96">
    <property type="expression patterns" value="baseline and differential"/>
</dbReference>
<dbReference type="GO" id="GO:0005886">
    <property type="term" value="C:plasma membrane"/>
    <property type="evidence" value="ECO:0007669"/>
    <property type="project" value="UniProtKB-SubCell"/>
</dbReference>
<dbReference type="GO" id="GO:0009734">
    <property type="term" value="P:auxin-activated signaling pathway"/>
    <property type="evidence" value="ECO:0007669"/>
    <property type="project" value="UniProtKB-KW"/>
</dbReference>
<dbReference type="InterPro" id="IPR003676">
    <property type="entry name" value="SAUR_fam"/>
</dbReference>
<dbReference type="PANTHER" id="PTHR31175">
    <property type="entry name" value="AUXIN-RESPONSIVE FAMILY PROTEIN"/>
    <property type="match status" value="1"/>
</dbReference>
<dbReference type="PANTHER" id="PTHR31175:SF99">
    <property type="entry name" value="AUXIN-RESPONSIVE PROTEIN SAUR61-RELATED"/>
    <property type="match status" value="1"/>
</dbReference>
<dbReference type="Pfam" id="PF02519">
    <property type="entry name" value="Auxin_inducible"/>
    <property type="match status" value="1"/>
</dbReference>
<keyword id="KW-0927">Auxin signaling pathway</keyword>
<keyword id="KW-1003">Cell membrane</keyword>
<keyword id="KW-0217">Developmental protein</keyword>
<keyword id="KW-0341">Growth regulation</keyword>
<keyword id="KW-0472">Membrane</keyword>
<keyword id="KW-1185">Reference proteome</keyword>
<reference key="1">
    <citation type="journal article" date="2000" name="Nature">
        <title>Sequence and analysis of chromosome 1 of the plant Arabidopsis thaliana.</title>
        <authorList>
            <person name="Theologis A."/>
            <person name="Ecker J.R."/>
            <person name="Palm C.J."/>
            <person name="Federspiel N.A."/>
            <person name="Kaul S."/>
            <person name="White O."/>
            <person name="Alonso J."/>
            <person name="Altafi H."/>
            <person name="Araujo R."/>
            <person name="Bowman C.L."/>
            <person name="Brooks S.Y."/>
            <person name="Buehler E."/>
            <person name="Chan A."/>
            <person name="Chao Q."/>
            <person name="Chen H."/>
            <person name="Cheuk R.F."/>
            <person name="Chin C.W."/>
            <person name="Chung M.K."/>
            <person name="Conn L."/>
            <person name="Conway A.B."/>
            <person name="Conway A.R."/>
            <person name="Creasy T.H."/>
            <person name="Dewar K."/>
            <person name="Dunn P."/>
            <person name="Etgu P."/>
            <person name="Feldblyum T.V."/>
            <person name="Feng J.-D."/>
            <person name="Fong B."/>
            <person name="Fujii C.Y."/>
            <person name="Gill J.E."/>
            <person name="Goldsmith A.D."/>
            <person name="Haas B."/>
            <person name="Hansen N.F."/>
            <person name="Hughes B."/>
            <person name="Huizar L."/>
            <person name="Hunter J.L."/>
            <person name="Jenkins J."/>
            <person name="Johnson-Hopson C."/>
            <person name="Khan S."/>
            <person name="Khaykin E."/>
            <person name="Kim C.J."/>
            <person name="Koo H.L."/>
            <person name="Kremenetskaia I."/>
            <person name="Kurtz D.B."/>
            <person name="Kwan A."/>
            <person name="Lam B."/>
            <person name="Langin-Hooper S."/>
            <person name="Lee A."/>
            <person name="Lee J.M."/>
            <person name="Lenz C.A."/>
            <person name="Li J.H."/>
            <person name="Li Y.-P."/>
            <person name="Lin X."/>
            <person name="Liu S.X."/>
            <person name="Liu Z.A."/>
            <person name="Luros J.S."/>
            <person name="Maiti R."/>
            <person name="Marziali A."/>
            <person name="Militscher J."/>
            <person name="Miranda M."/>
            <person name="Nguyen M."/>
            <person name="Nierman W.C."/>
            <person name="Osborne B.I."/>
            <person name="Pai G."/>
            <person name="Peterson J."/>
            <person name="Pham P.K."/>
            <person name="Rizzo M."/>
            <person name="Rooney T."/>
            <person name="Rowley D."/>
            <person name="Sakano H."/>
            <person name="Salzberg S.L."/>
            <person name="Schwartz J.R."/>
            <person name="Shinn P."/>
            <person name="Southwick A.M."/>
            <person name="Sun H."/>
            <person name="Tallon L.J."/>
            <person name="Tambunga G."/>
            <person name="Toriumi M.J."/>
            <person name="Town C.D."/>
            <person name="Utterback T."/>
            <person name="Van Aken S."/>
            <person name="Vaysberg M."/>
            <person name="Vysotskaia V.S."/>
            <person name="Walker M."/>
            <person name="Wu D."/>
            <person name="Yu G."/>
            <person name="Fraser C.M."/>
            <person name="Venter J.C."/>
            <person name="Davis R.W."/>
        </authorList>
    </citation>
    <scope>NUCLEOTIDE SEQUENCE [LARGE SCALE GENOMIC DNA]</scope>
    <source>
        <strain>cv. Columbia</strain>
    </source>
</reference>
<reference key="2">
    <citation type="journal article" date="2017" name="Plant J.">
        <title>Araport11: a complete reannotation of the Arabidopsis thaliana reference genome.</title>
        <authorList>
            <person name="Cheng C.Y."/>
            <person name="Krishnakumar V."/>
            <person name="Chan A.P."/>
            <person name="Thibaud-Nissen F."/>
            <person name="Schobel S."/>
            <person name="Town C.D."/>
        </authorList>
    </citation>
    <scope>GENOME REANNOTATION</scope>
    <source>
        <strain>cv. Columbia</strain>
    </source>
</reference>
<reference key="3">
    <citation type="journal article" date="2006" name="Plant Biotechnol. J.">
        <title>Simultaneous high-throughput recombinational cloning of open reading frames in closed and open configurations.</title>
        <authorList>
            <person name="Underwood B.A."/>
            <person name="Vanderhaeghen R."/>
            <person name="Whitford R."/>
            <person name="Town C.D."/>
            <person name="Hilson P."/>
        </authorList>
    </citation>
    <scope>NUCLEOTIDE SEQUENCE [LARGE SCALE MRNA]</scope>
    <source>
        <strain>cv. Columbia</strain>
    </source>
</reference>
<reference key="4">
    <citation type="submission" date="2006-02" db="EMBL/GenBank/DDBJ databases">
        <title>Arabidopsis ORF clones.</title>
        <authorList>
            <person name="Shinn P."/>
            <person name="Chen H."/>
            <person name="Kim C.J."/>
            <person name="Ecker J.R."/>
        </authorList>
    </citation>
    <scope>NUCLEOTIDE SEQUENCE [LARGE SCALE MRNA]</scope>
    <source>
        <strain>cv. Columbia</strain>
    </source>
</reference>
<reference key="5">
    <citation type="submission" date="2002-03" db="EMBL/GenBank/DDBJ databases">
        <title>Full-length cDNA from Arabidopsis thaliana.</title>
        <authorList>
            <person name="Brover V.V."/>
            <person name="Troukhan M.E."/>
            <person name="Alexandrov N.A."/>
            <person name="Lu Y.-P."/>
            <person name="Flavell R.B."/>
            <person name="Feldmann K.A."/>
        </authorList>
    </citation>
    <scope>NUCLEOTIDE SEQUENCE [LARGE SCALE MRNA]</scope>
</reference>
<reference key="6">
    <citation type="journal article" date="2002" name="Plant Mol. Biol.">
        <title>Auxin-responsive gene expression: genes, promoters and regulatory factors.</title>
        <authorList>
            <person name="Hagen G."/>
            <person name="Guilfoyle T.J."/>
        </authorList>
    </citation>
    <scope>GENE FAMILY</scope>
    <scope>NOMENCLATURE</scope>
</reference>